<keyword id="KW-0963">Cytoplasm</keyword>
<keyword id="KW-0227">DNA damage</keyword>
<keyword id="KW-0234">DNA repair</keyword>
<keyword id="KW-0255">Endonuclease</keyword>
<keyword id="KW-0378">Hydrolase</keyword>
<keyword id="KW-0540">Nuclease</keyword>
<keyword id="KW-1185">Reference proteome</keyword>
<evidence type="ECO:0000255" key="1">
    <source>
        <dbReference type="HAMAP-Rule" id="MF_00759"/>
    </source>
</evidence>
<gene>
    <name evidence="1" type="primary">mutH</name>
    <name type="ordered locus">SDY_3048</name>
</gene>
<protein>
    <recommendedName>
        <fullName evidence="1">DNA mismatch repair protein MutH</fullName>
    </recommendedName>
    <alternativeName>
        <fullName evidence="1">Methyl-directed mismatch repair protein</fullName>
    </alternativeName>
</protein>
<comment type="function">
    <text evidence="1">Sequence-specific endonuclease that cleaves unmethylated GATC sequences. It is involved in DNA mismatch repair.</text>
</comment>
<comment type="subcellular location">
    <subcellularLocation>
        <location evidence="1">Cytoplasm</location>
    </subcellularLocation>
</comment>
<comment type="similarity">
    <text evidence="1">Belongs to the MutH family.</text>
</comment>
<feature type="chain" id="PRO_1000046714" description="DNA mismatch repair protein MutH">
    <location>
        <begin position="1"/>
        <end position="229"/>
    </location>
</feature>
<accession>Q32C90</accession>
<sequence>MSQPRPLLSPPETEEQLLAQAQQLSGYTLGELAALAGLVTPENLKRDKGWIGVLLEIWLGASAGSKPEQDFAALGVELKTIPVDSLGRPLETTFVCVAPLTGNSGVTWETSHVRHKLKRVLWIPVEGERSIPLAQRRVGSPLLWSPNEEEDRQLREDWEELMDMIVLGQVERITARHGEYLQIRPKAANAKALTEAIGARGERILTLPRGFYLKKNFTSALLARHFLIQ</sequence>
<proteinExistence type="inferred from homology"/>
<dbReference type="EMBL" id="CP000034">
    <property type="protein sequence ID" value="ABB63065.1"/>
    <property type="molecule type" value="Genomic_DNA"/>
</dbReference>
<dbReference type="RefSeq" id="WP_000082188.1">
    <property type="nucleotide sequence ID" value="NC_007606.1"/>
</dbReference>
<dbReference type="RefSeq" id="YP_404556.1">
    <property type="nucleotide sequence ID" value="NC_007606.1"/>
</dbReference>
<dbReference type="SMR" id="Q32C90"/>
<dbReference type="STRING" id="300267.SDY_3048"/>
<dbReference type="EnsemblBacteria" id="ABB63065">
    <property type="protein sequence ID" value="ABB63065"/>
    <property type="gene ID" value="SDY_3048"/>
</dbReference>
<dbReference type="GeneID" id="93779167"/>
<dbReference type="KEGG" id="sdy:SDY_3048"/>
<dbReference type="PATRIC" id="fig|300267.13.peg.3653"/>
<dbReference type="HOGENOM" id="CLU_086669_0_0_6"/>
<dbReference type="Proteomes" id="UP000002716">
    <property type="component" value="Chromosome"/>
</dbReference>
<dbReference type="GO" id="GO:0005737">
    <property type="term" value="C:cytoplasm"/>
    <property type="evidence" value="ECO:0007669"/>
    <property type="project" value="UniProtKB-SubCell"/>
</dbReference>
<dbReference type="GO" id="GO:0003677">
    <property type="term" value="F:DNA binding"/>
    <property type="evidence" value="ECO:0007669"/>
    <property type="project" value="InterPro"/>
</dbReference>
<dbReference type="GO" id="GO:0004519">
    <property type="term" value="F:endonuclease activity"/>
    <property type="evidence" value="ECO:0007669"/>
    <property type="project" value="UniProtKB-UniRule"/>
</dbReference>
<dbReference type="GO" id="GO:0006304">
    <property type="term" value="P:DNA modification"/>
    <property type="evidence" value="ECO:0007669"/>
    <property type="project" value="InterPro"/>
</dbReference>
<dbReference type="GO" id="GO:0006298">
    <property type="term" value="P:mismatch repair"/>
    <property type="evidence" value="ECO:0007669"/>
    <property type="project" value="UniProtKB-UniRule"/>
</dbReference>
<dbReference type="CDD" id="cd00583">
    <property type="entry name" value="MutH-like"/>
    <property type="match status" value="1"/>
</dbReference>
<dbReference type="FunFam" id="3.40.600.10:FF:000001">
    <property type="entry name" value="DNA mismatch repair protein MutH"/>
    <property type="match status" value="1"/>
</dbReference>
<dbReference type="Gene3D" id="3.40.600.10">
    <property type="entry name" value="DNA mismatch repair MutH/Restriction endonuclease, type II"/>
    <property type="match status" value="1"/>
</dbReference>
<dbReference type="HAMAP" id="MF_00759">
    <property type="entry name" value="MutH"/>
    <property type="match status" value="1"/>
</dbReference>
<dbReference type="InterPro" id="IPR004230">
    <property type="entry name" value="DNA_mismatch_repair_MutH"/>
</dbReference>
<dbReference type="InterPro" id="IPR011337">
    <property type="entry name" value="DNA_rep_MutH/RE_typeII_Sau3AI"/>
</dbReference>
<dbReference type="InterPro" id="IPR037057">
    <property type="entry name" value="DNA_rep_MutH/T2_RE_sf"/>
</dbReference>
<dbReference type="InterPro" id="IPR011335">
    <property type="entry name" value="Restrct_endonuc-II-like"/>
</dbReference>
<dbReference type="NCBIfam" id="TIGR02248">
    <property type="entry name" value="mutH_TIGR"/>
    <property type="match status" value="1"/>
</dbReference>
<dbReference type="NCBIfam" id="NF003458">
    <property type="entry name" value="PRK05070.1"/>
    <property type="match status" value="1"/>
</dbReference>
<dbReference type="Pfam" id="PF02976">
    <property type="entry name" value="MutH"/>
    <property type="match status" value="1"/>
</dbReference>
<dbReference type="SMART" id="SM00927">
    <property type="entry name" value="MutH"/>
    <property type="match status" value="1"/>
</dbReference>
<dbReference type="SUPFAM" id="SSF52980">
    <property type="entry name" value="Restriction endonuclease-like"/>
    <property type="match status" value="1"/>
</dbReference>
<reference key="1">
    <citation type="journal article" date="2005" name="Nucleic Acids Res.">
        <title>Genome dynamics and diversity of Shigella species, the etiologic agents of bacillary dysentery.</title>
        <authorList>
            <person name="Yang F."/>
            <person name="Yang J."/>
            <person name="Zhang X."/>
            <person name="Chen L."/>
            <person name="Jiang Y."/>
            <person name="Yan Y."/>
            <person name="Tang X."/>
            <person name="Wang J."/>
            <person name="Xiong Z."/>
            <person name="Dong J."/>
            <person name="Xue Y."/>
            <person name="Zhu Y."/>
            <person name="Xu X."/>
            <person name="Sun L."/>
            <person name="Chen S."/>
            <person name="Nie H."/>
            <person name="Peng J."/>
            <person name="Xu J."/>
            <person name="Wang Y."/>
            <person name="Yuan Z."/>
            <person name="Wen Y."/>
            <person name="Yao Z."/>
            <person name="Shen Y."/>
            <person name="Qiang B."/>
            <person name="Hou Y."/>
            <person name="Yu J."/>
            <person name="Jin Q."/>
        </authorList>
    </citation>
    <scope>NUCLEOTIDE SEQUENCE [LARGE SCALE GENOMIC DNA]</scope>
    <source>
        <strain>Sd197</strain>
    </source>
</reference>
<name>MUTH_SHIDS</name>
<organism>
    <name type="scientific">Shigella dysenteriae serotype 1 (strain Sd197)</name>
    <dbReference type="NCBI Taxonomy" id="300267"/>
    <lineage>
        <taxon>Bacteria</taxon>
        <taxon>Pseudomonadati</taxon>
        <taxon>Pseudomonadota</taxon>
        <taxon>Gammaproteobacteria</taxon>
        <taxon>Enterobacterales</taxon>
        <taxon>Enterobacteriaceae</taxon>
        <taxon>Shigella</taxon>
    </lineage>
</organism>